<proteinExistence type="inferred from homology"/>
<gene>
    <name type="primary">J4</name>
</gene>
<evidence type="ECO:0000255" key="1">
    <source>
        <dbReference type="PROSITE-ProRule" id="PRU00160"/>
    </source>
</evidence>
<evidence type="ECO:0000305" key="2"/>
<comment type="similarity">
    <text evidence="2">Belongs to the protein-tyrosine phosphatase family.</text>
</comment>
<comment type="caution">
    <text evidence="2">PTP-J3 does not appear to be a functional PTP.</text>
</comment>
<dbReference type="EMBL" id="AY875686">
    <property type="protein sequence ID" value="AAW51792.1"/>
    <property type="molecule type" value="Genomic_DNA"/>
</dbReference>
<dbReference type="RefSeq" id="YP_239390.1">
    <property type="nucleotide sequence ID" value="NC_007036.1"/>
</dbReference>
<dbReference type="SMR" id="Q5I138"/>
<dbReference type="KEGG" id="vg:5075826"/>
<dbReference type="Proteomes" id="UP000008168">
    <property type="component" value="Genome"/>
</dbReference>
<dbReference type="GO" id="GO:0004725">
    <property type="term" value="F:protein tyrosine phosphatase activity"/>
    <property type="evidence" value="ECO:0007669"/>
    <property type="project" value="InterPro"/>
</dbReference>
<dbReference type="CDD" id="cd00047">
    <property type="entry name" value="PTPc"/>
    <property type="match status" value="1"/>
</dbReference>
<dbReference type="Gene3D" id="3.90.190.10">
    <property type="entry name" value="Protein tyrosine phosphatase superfamily"/>
    <property type="match status" value="1"/>
</dbReference>
<dbReference type="InterPro" id="IPR029021">
    <property type="entry name" value="Prot-tyrosine_phosphatase-like"/>
</dbReference>
<dbReference type="InterPro" id="IPR050348">
    <property type="entry name" value="Protein-Tyr_Phosphatase"/>
</dbReference>
<dbReference type="InterPro" id="IPR000242">
    <property type="entry name" value="PTP_cat"/>
</dbReference>
<dbReference type="PANTHER" id="PTHR19134:SF534">
    <property type="entry name" value="LD27988P"/>
    <property type="match status" value="1"/>
</dbReference>
<dbReference type="PANTHER" id="PTHR19134">
    <property type="entry name" value="RECEPTOR-TYPE TYROSINE-PROTEIN PHOSPHATASE"/>
    <property type="match status" value="1"/>
</dbReference>
<dbReference type="Pfam" id="PF00102">
    <property type="entry name" value="Y_phosphatase"/>
    <property type="match status" value="1"/>
</dbReference>
<dbReference type="PRINTS" id="PR00700">
    <property type="entry name" value="PRTYPHPHTASE"/>
</dbReference>
<dbReference type="SMART" id="SM00194">
    <property type="entry name" value="PTPc"/>
    <property type="match status" value="1"/>
</dbReference>
<dbReference type="SUPFAM" id="SSF52799">
    <property type="entry name" value="(Phosphotyrosine protein) phosphatases II"/>
    <property type="match status" value="1"/>
</dbReference>
<dbReference type="PROSITE" id="PS50055">
    <property type="entry name" value="TYR_PHOSPHATASE_PTP"/>
    <property type="match status" value="1"/>
</dbReference>
<reference key="1">
    <citation type="journal article" date="2006" name="Virology">
        <title>Polydnavirus genomes reflect their dual roles as mutualists and pathogens.</title>
        <authorList>
            <person name="Webb B.A."/>
            <person name="Strand M.R."/>
            <person name="Dickey S.E."/>
            <person name="Beck M.H."/>
            <person name="Hilgarth R.S."/>
            <person name="Barney W.E."/>
            <person name="Kadash K."/>
            <person name="Kroemer J.A."/>
            <person name="Lindstrom K.G."/>
            <person name="Rattanadechakul W."/>
            <person name="Shelby K.S."/>
            <person name="Thoetkiattikul H."/>
            <person name="Turnbull M.W."/>
            <person name="Witherell R.A."/>
        </authorList>
    </citation>
    <scope>NUCLEOTIDE SEQUENCE [GENOMIC DNA]</scope>
</reference>
<keyword id="KW-1185">Reference proteome</keyword>
<accession>Q5I138</accession>
<organismHost>
    <name type="scientific">Microplitis demolitor</name>
    <name type="common">Parasitoid wasp</name>
    <dbReference type="NCBI Taxonomy" id="69319"/>
</organismHost>
<sequence>MTTQPDSMSAIDFLIFMEHPVSLSSIADEYYTIVPRQEVKALSSSNQTMNEEQEHSCMRIIRFLHCRVKLSGNRNVLNANYVDGYEHKRKYIYTKSPCANNVDEYLQMMWDKNVEIIVVPSRSENDVNFHQYWSPNEGAVIEYDNFKIETLEVTTKPQYILTLLILTNRKGRIHRISHFEYTAWPVYSICHDLRAFLDFVSNINEQYTYLEKHKPSRQTRSYNCAFASMVTIAQQYFVYLIPVLQNSKRRE</sequence>
<name>PTPJ3_MDBVW</name>
<organism>
    <name type="scientific">Microplitis demolitor bracovirus (isolate Webb)</name>
    <name type="common">MdBV</name>
    <dbReference type="NCBI Taxonomy" id="654919"/>
    <lineage>
        <taxon>Viruses</taxon>
        <taxon>Viruses incertae sedis</taxon>
        <taxon>Polydnaviriformidae</taxon>
        <taxon>Bracoviriform</taxon>
        <taxon>Microplitis demolitor bracovirus</taxon>
    </lineage>
</organism>
<protein>
    <recommendedName>
        <fullName>Tyrosine phosphatase-like protein J3</fullName>
        <shortName>PTP-J3</shortName>
    </recommendedName>
</protein>
<feature type="chain" id="PRO_0000405357" description="Tyrosine phosphatase-like protein J3">
    <location>
        <begin position="1"/>
        <end position="251"/>
    </location>
</feature>
<feature type="domain" description="Tyrosine-protein phosphatase" evidence="1">
    <location>
        <begin position="26"/>
        <end position="251"/>
    </location>
</feature>